<sequence length="382" mass="44978">MGKREIHFTPVGRQVQRVLEYPLRLENRSPMSYSRRSRYSPSLSPYDKRRGRSVSRSLSRSPTRSVSSDAENPGNSLYVTGLSHRVTERDLEDHFAKEGKVTDVHLVLDPWTRESRGFGFISMKSVGDANRCIRSLDHSVLQGRVITVEKARRRRGRTPTPGKYLGLRTARGRHKSPSYSPRRSVSCSRSRSRSYSSDRGRSYSPSYGRRGRSSSYSPFYRRRRFYSPSRSPSPDDRYNRRRDRSYSPYYRRRDRSRSYSRNCRARDRSPYYMRRYRSRSRSYSPRYRARDRSCSPYYRGRDRSYSPHYQGRDRSYSPESRYYRRHRSVSGSVSPGGRSMSRSISPRKGRKESRSKSRRHDRQSSMCHSRSARSSTSRSVSP</sequence>
<accession>Q84TH4</accession>
<accession>Q940S1</accession>
<accession>Q949Y9</accession>
<accession>Q9LNV4</accession>
<protein>
    <recommendedName>
        <fullName>Serine/arginine-rich splicing factor SR45a</fullName>
        <shortName>At-SR45A</shortName>
        <shortName>AtSR45a</shortName>
    </recommendedName>
    <alternativeName>
        <fullName>Protein TRANSFORMER2-like</fullName>
        <shortName>atTra2</shortName>
    </alternativeName>
</protein>
<keyword id="KW-0025">Alternative splicing</keyword>
<keyword id="KW-0507">mRNA processing</keyword>
<keyword id="KW-0508">mRNA splicing</keyword>
<keyword id="KW-0539">Nucleus</keyword>
<keyword id="KW-1185">Reference proteome</keyword>
<keyword id="KW-0687">Ribonucleoprotein</keyword>
<keyword id="KW-0747">Spliceosome</keyword>
<dbReference type="EMBL" id="AC022464">
    <property type="protein sequence ID" value="AAF79558.1"/>
    <property type="status" value="ALT_SEQ"/>
    <property type="molecule type" value="Genomic_DNA"/>
</dbReference>
<dbReference type="EMBL" id="CP002684">
    <property type="protein sequence ID" value="AEE28112.1"/>
    <property type="molecule type" value="Genomic_DNA"/>
</dbReference>
<dbReference type="EMBL" id="CP002684">
    <property type="protein sequence ID" value="AEE28113.1"/>
    <property type="molecule type" value="Genomic_DNA"/>
</dbReference>
<dbReference type="EMBL" id="CP002684">
    <property type="protein sequence ID" value="ANM60737.1"/>
    <property type="molecule type" value="Genomic_DNA"/>
</dbReference>
<dbReference type="EMBL" id="CP002684">
    <property type="protein sequence ID" value="ANM60738.1"/>
    <property type="molecule type" value="Genomic_DNA"/>
</dbReference>
<dbReference type="EMBL" id="BT005797">
    <property type="protein sequence ID" value="AAO64199.1"/>
    <property type="molecule type" value="mRNA"/>
</dbReference>
<dbReference type="EMBL" id="AY053418">
    <property type="protein sequence ID" value="AAK96648.1"/>
    <property type="molecule type" value="mRNA"/>
</dbReference>
<dbReference type="EMBL" id="AY050800">
    <property type="protein sequence ID" value="AAK92735.1"/>
    <property type="molecule type" value="mRNA"/>
</dbReference>
<dbReference type="RefSeq" id="NP_001323001.1">
    <molecule id="Q84TH4-2"/>
    <property type="nucleotide sequence ID" value="NM_001331692.1"/>
</dbReference>
<dbReference type="RefSeq" id="NP_001323002.1">
    <molecule id="Q84TH4-4"/>
    <property type="nucleotide sequence ID" value="NM_001331694.1"/>
</dbReference>
<dbReference type="RefSeq" id="NP_563787.2">
    <molecule id="Q84TH4-1"/>
    <property type="nucleotide sequence ID" value="NM_100609.4"/>
</dbReference>
<dbReference type="RefSeq" id="NP_849605.1">
    <molecule id="Q84TH4-2"/>
    <property type="nucleotide sequence ID" value="NM_179274.2"/>
</dbReference>
<dbReference type="SMR" id="Q84TH4"/>
<dbReference type="BioGRID" id="22487">
    <property type="interactions" value="7"/>
</dbReference>
<dbReference type="FunCoup" id="Q84TH4">
    <property type="interactions" value="123"/>
</dbReference>
<dbReference type="IntAct" id="Q84TH4">
    <property type="interactions" value="1"/>
</dbReference>
<dbReference type="STRING" id="3702.Q84TH4"/>
<dbReference type="GlyGen" id="Q84TH4">
    <property type="glycosylation" value="1 site"/>
</dbReference>
<dbReference type="iPTMnet" id="Q84TH4"/>
<dbReference type="PaxDb" id="3702-AT1G07350.1"/>
<dbReference type="ProteomicsDB" id="226860">
    <molecule id="Q84TH4-1"/>
</dbReference>
<dbReference type="EnsemblPlants" id="AT1G07350.1">
    <molecule id="Q84TH4-1"/>
    <property type="protein sequence ID" value="AT1G07350.1"/>
    <property type="gene ID" value="AT1G07350"/>
</dbReference>
<dbReference type="EnsemblPlants" id="AT1G07350.2">
    <molecule id="Q84TH4-2"/>
    <property type="protein sequence ID" value="AT1G07350.2"/>
    <property type="gene ID" value="AT1G07350"/>
</dbReference>
<dbReference type="EnsemblPlants" id="AT1G07350.3">
    <molecule id="Q84TH4-2"/>
    <property type="protein sequence ID" value="AT1G07350.3"/>
    <property type="gene ID" value="AT1G07350"/>
</dbReference>
<dbReference type="EnsemblPlants" id="AT1G07350.5">
    <molecule id="Q84TH4-4"/>
    <property type="protein sequence ID" value="AT1G07350.5"/>
    <property type="gene ID" value="AT1G07350"/>
</dbReference>
<dbReference type="GeneID" id="837246"/>
<dbReference type="Gramene" id="AT1G07350.1">
    <molecule id="Q84TH4-1"/>
    <property type="protein sequence ID" value="AT1G07350.1"/>
    <property type="gene ID" value="AT1G07350"/>
</dbReference>
<dbReference type="Gramene" id="AT1G07350.2">
    <molecule id="Q84TH4-2"/>
    <property type="protein sequence ID" value="AT1G07350.2"/>
    <property type="gene ID" value="AT1G07350"/>
</dbReference>
<dbReference type="Gramene" id="AT1G07350.3">
    <molecule id="Q84TH4-2"/>
    <property type="protein sequence ID" value="AT1G07350.3"/>
    <property type="gene ID" value="AT1G07350"/>
</dbReference>
<dbReference type="Gramene" id="AT1G07350.5">
    <molecule id="Q84TH4-4"/>
    <property type="protein sequence ID" value="AT1G07350.5"/>
    <property type="gene ID" value="AT1G07350"/>
</dbReference>
<dbReference type="KEGG" id="ath:AT1G07350"/>
<dbReference type="Araport" id="AT1G07350"/>
<dbReference type="TAIR" id="AT1G07350">
    <property type="gene designation" value="SR45A"/>
</dbReference>
<dbReference type="eggNOG" id="KOG4661">
    <property type="taxonomic scope" value="Eukaryota"/>
</dbReference>
<dbReference type="HOGENOM" id="CLU_050438_0_0_1"/>
<dbReference type="InParanoid" id="Q84TH4"/>
<dbReference type="OMA" id="KSSCVTP"/>
<dbReference type="PRO" id="PR:Q84TH4"/>
<dbReference type="Proteomes" id="UP000006548">
    <property type="component" value="Chromosome 1"/>
</dbReference>
<dbReference type="ExpressionAtlas" id="Q84TH4">
    <property type="expression patterns" value="baseline and differential"/>
</dbReference>
<dbReference type="GO" id="GO:0016607">
    <property type="term" value="C:nuclear speck"/>
    <property type="evidence" value="ECO:0007669"/>
    <property type="project" value="UniProtKB-SubCell"/>
</dbReference>
<dbReference type="GO" id="GO:0005681">
    <property type="term" value="C:spliceosomal complex"/>
    <property type="evidence" value="ECO:0007669"/>
    <property type="project" value="UniProtKB-KW"/>
</dbReference>
<dbReference type="GO" id="GO:0003723">
    <property type="term" value="F:RNA binding"/>
    <property type="evidence" value="ECO:0007669"/>
    <property type="project" value="InterPro"/>
</dbReference>
<dbReference type="GO" id="GO:0006397">
    <property type="term" value="P:mRNA processing"/>
    <property type="evidence" value="ECO:0007669"/>
    <property type="project" value="UniProtKB-KW"/>
</dbReference>
<dbReference type="GO" id="GO:0043484">
    <property type="term" value="P:regulation of RNA splicing"/>
    <property type="evidence" value="ECO:0000315"/>
    <property type="project" value="TAIR"/>
</dbReference>
<dbReference type="GO" id="GO:0009644">
    <property type="term" value="P:response to high light intensity"/>
    <property type="evidence" value="ECO:0000315"/>
    <property type="project" value="TAIR"/>
</dbReference>
<dbReference type="GO" id="GO:0008380">
    <property type="term" value="P:RNA splicing"/>
    <property type="evidence" value="ECO:0000303"/>
    <property type="project" value="TAIR"/>
</dbReference>
<dbReference type="FunFam" id="3.30.70.330:FF:000790">
    <property type="entry name" value="Serine/arginine-rich splicing factor SR45a"/>
    <property type="match status" value="1"/>
</dbReference>
<dbReference type="Gene3D" id="3.30.70.330">
    <property type="match status" value="1"/>
</dbReference>
<dbReference type="InterPro" id="IPR012677">
    <property type="entry name" value="Nucleotide-bd_a/b_plait_sf"/>
</dbReference>
<dbReference type="InterPro" id="IPR035979">
    <property type="entry name" value="RBD_domain_sf"/>
</dbReference>
<dbReference type="InterPro" id="IPR050441">
    <property type="entry name" value="RBM"/>
</dbReference>
<dbReference type="InterPro" id="IPR000504">
    <property type="entry name" value="RRM_dom"/>
</dbReference>
<dbReference type="PANTHER" id="PTHR48034">
    <property type="entry name" value="TRANSFORMER-2 SEX-DETERMINING PROTEIN-RELATED"/>
    <property type="match status" value="1"/>
</dbReference>
<dbReference type="Pfam" id="PF00076">
    <property type="entry name" value="RRM_1"/>
    <property type="match status" value="1"/>
</dbReference>
<dbReference type="SMART" id="SM00360">
    <property type="entry name" value="RRM"/>
    <property type="match status" value="1"/>
</dbReference>
<dbReference type="SUPFAM" id="SSF54928">
    <property type="entry name" value="RNA-binding domain, RBD"/>
    <property type="match status" value="1"/>
</dbReference>
<dbReference type="PROSITE" id="PS50102">
    <property type="entry name" value="RRM"/>
    <property type="match status" value="1"/>
</dbReference>
<organism>
    <name type="scientific">Arabidopsis thaliana</name>
    <name type="common">Mouse-ear cress</name>
    <dbReference type="NCBI Taxonomy" id="3702"/>
    <lineage>
        <taxon>Eukaryota</taxon>
        <taxon>Viridiplantae</taxon>
        <taxon>Streptophyta</taxon>
        <taxon>Embryophyta</taxon>
        <taxon>Tracheophyta</taxon>
        <taxon>Spermatophyta</taxon>
        <taxon>Magnoliopsida</taxon>
        <taxon>eudicotyledons</taxon>
        <taxon>Gunneridae</taxon>
        <taxon>Pentapetalae</taxon>
        <taxon>rosids</taxon>
        <taxon>malvids</taxon>
        <taxon>Brassicales</taxon>
        <taxon>Brassicaceae</taxon>
        <taxon>Camelineae</taxon>
        <taxon>Arabidopsis</taxon>
    </lineage>
</organism>
<name>SR45A_ARATH</name>
<proteinExistence type="evidence at protein level"/>
<reference key="1">
    <citation type="journal article" date="2000" name="Nature">
        <title>Sequence and analysis of chromosome 1 of the plant Arabidopsis thaliana.</title>
        <authorList>
            <person name="Theologis A."/>
            <person name="Ecker J.R."/>
            <person name="Palm C.J."/>
            <person name="Federspiel N.A."/>
            <person name="Kaul S."/>
            <person name="White O."/>
            <person name="Alonso J."/>
            <person name="Altafi H."/>
            <person name="Araujo R."/>
            <person name="Bowman C.L."/>
            <person name="Brooks S.Y."/>
            <person name="Buehler E."/>
            <person name="Chan A."/>
            <person name="Chao Q."/>
            <person name="Chen H."/>
            <person name="Cheuk R.F."/>
            <person name="Chin C.W."/>
            <person name="Chung M.K."/>
            <person name="Conn L."/>
            <person name="Conway A.B."/>
            <person name="Conway A.R."/>
            <person name="Creasy T.H."/>
            <person name="Dewar K."/>
            <person name="Dunn P."/>
            <person name="Etgu P."/>
            <person name="Feldblyum T.V."/>
            <person name="Feng J.-D."/>
            <person name="Fong B."/>
            <person name="Fujii C.Y."/>
            <person name="Gill J.E."/>
            <person name="Goldsmith A.D."/>
            <person name="Haas B."/>
            <person name="Hansen N.F."/>
            <person name="Hughes B."/>
            <person name="Huizar L."/>
            <person name="Hunter J.L."/>
            <person name="Jenkins J."/>
            <person name="Johnson-Hopson C."/>
            <person name="Khan S."/>
            <person name="Khaykin E."/>
            <person name="Kim C.J."/>
            <person name="Koo H.L."/>
            <person name="Kremenetskaia I."/>
            <person name="Kurtz D.B."/>
            <person name="Kwan A."/>
            <person name="Lam B."/>
            <person name="Langin-Hooper S."/>
            <person name="Lee A."/>
            <person name="Lee J.M."/>
            <person name="Lenz C.A."/>
            <person name="Li J.H."/>
            <person name="Li Y.-P."/>
            <person name="Lin X."/>
            <person name="Liu S.X."/>
            <person name="Liu Z.A."/>
            <person name="Luros J.S."/>
            <person name="Maiti R."/>
            <person name="Marziali A."/>
            <person name="Militscher J."/>
            <person name="Miranda M."/>
            <person name="Nguyen M."/>
            <person name="Nierman W.C."/>
            <person name="Osborne B.I."/>
            <person name="Pai G."/>
            <person name="Peterson J."/>
            <person name="Pham P.K."/>
            <person name="Rizzo M."/>
            <person name="Rooney T."/>
            <person name="Rowley D."/>
            <person name="Sakano H."/>
            <person name="Salzberg S.L."/>
            <person name="Schwartz J.R."/>
            <person name="Shinn P."/>
            <person name="Southwick A.M."/>
            <person name="Sun H."/>
            <person name="Tallon L.J."/>
            <person name="Tambunga G."/>
            <person name="Toriumi M.J."/>
            <person name="Town C.D."/>
            <person name="Utterback T."/>
            <person name="Van Aken S."/>
            <person name="Vaysberg M."/>
            <person name="Vysotskaia V.S."/>
            <person name="Walker M."/>
            <person name="Wu D."/>
            <person name="Yu G."/>
            <person name="Fraser C.M."/>
            <person name="Venter J.C."/>
            <person name="Davis R.W."/>
        </authorList>
    </citation>
    <scope>NUCLEOTIDE SEQUENCE [LARGE SCALE GENOMIC DNA]</scope>
    <source>
        <strain>cv. Columbia</strain>
    </source>
</reference>
<reference key="2">
    <citation type="journal article" date="2017" name="Plant J.">
        <title>Araport11: a complete reannotation of the Arabidopsis thaliana reference genome.</title>
        <authorList>
            <person name="Cheng C.Y."/>
            <person name="Krishnakumar V."/>
            <person name="Chan A.P."/>
            <person name="Thibaud-Nissen F."/>
            <person name="Schobel S."/>
            <person name="Town C.D."/>
        </authorList>
    </citation>
    <scope>GENOME REANNOTATION</scope>
    <source>
        <strain>cv. Columbia</strain>
    </source>
</reference>
<reference key="3">
    <citation type="journal article" date="2003" name="Science">
        <title>Empirical analysis of transcriptional activity in the Arabidopsis genome.</title>
        <authorList>
            <person name="Yamada K."/>
            <person name="Lim J."/>
            <person name="Dale J.M."/>
            <person name="Chen H."/>
            <person name="Shinn P."/>
            <person name="Palm C.J."/>
            <person name="Southwick A.M."/>
            <person name="Wu H.C."/>
            <person name="Kim C.J."/>
            <person name="Nguyen M."/>
            <person name="Pham P.K."/>
            <person name="Cheuk R.F."/>
            <person name="Karlin-Newmann G."/>
            <person name="Liu S.X."/>
            <person name="Lam B."/>
            <person name="Sakano H."/>
            <person name="Wu T."/>
            <person name="Yu G."/>
            <person name="Miranda M."/>
            <person name="Quach H.L."/>
            <person name="Tripp M."/>
            <person name="Chang C.H."/>
            <person name="Lee J.M."/>
            <person name="Toriumi M.J."/>
            <person name="Chan M.M."/>
            <person name="Tang C.C."/>
            <person name="Onodera C.S."/>
            <person name="Deng J.M."/>
            <person name="Akiyama K."/>
            <person name="Ansari Y."/>
            <person name="Arakawa T."/>
            <person name="Banh J."/>
            <person name="Banno F."/>
            <person name="Bowser L."/>
            <person name="Brooks S.Y."/>
            <person name="Carninci P."/>
            <person name="Chao Q."/>
            <person name="Choy N."/>
            <person name="Enju A."/>
            <person name="Goldsmith A.D."/>
            <person name="Gurjal M."/>
            <person name="Hansen N.F."/>
            <person name="Hayashizaki Y."/>
            <person name="Johnson-Hopson C."/>
            <person name="Hsuan V.W."/>
            <person name="Iida K."/>
            <person name="Karnes M."/>
            <person name="Khan S."/>
            <person name="Koesema E."/>
            <person name="Ishida J."/>
            <person name="Jiang P.X."/>
            <person name="Jones T."/>
            <person name="Kawai J."/>
            <person name="Kamiya A."/>
            <person name="Meyers C."/>
            <person name="Nakajima M."/>
            <person name="Narusaka M."/>
            <person name="Seki M."/>
            <person name="Sakurai T."/>
            <person name="Satou M."/>
            <person name="Tamse R."/>
            <person name="Vaysberg M."/>
            <person name="Wallender E.K."/>
            <person name="Wong C."/>
            <person name="Yamamura Y."/>
            <person name="Yuan S."/>
            <person name="Shinozaki K."/>
            <person name="Davis R.W."/>
            <person name="Theologis A."/>
            <person name="Ecker J.R."/>
        </authorList>
    </citation>
    <scope>NUCLEOTIDE SEQUENCE [LARGE SCALE MRNA] (ISOFORMS 1A; 2 AND 2B)</scope>
    <source>
        <strain>cv. Columbia</strain>
    </source>
</reference>
<reference key="4">
    <citation type="journal article" date="2006" name="Nucleic Acids Res.">
        <title>Phosphoproteomics reveals extensive in vivo phosphorylation of Arabidopsis proteins involved in RNA metabolism.</title>
        <authorList>
            <person name="de la Fuente van Bentem S."/>
            <person name="Anrather D."/>
            <person name="Roitinger E."/>
            <person name="Djamei A."/>
            <person name="Hufnagl T."/>
            <person name="Barta A."/>
            <person name="Csaszar E."/>
            <person name="Dohnal I."/>
            <person name="Lecourieux D."/>
            <person name="Hirt H."/>
        </authorList>
    </citation>
    <scope>IDENTIFICATION BY MASS SPECTROMETRY [LARGE SCALE ANALYSIS]</scope>
</reference>
<reference key="5">
    <citation type="journal article" date="2007" name="Plant Cell Physiol.">
        <title>Differential expression of alternatively spliced mRNAs of Arabidopsis SR protein homologs, atSR30 and atSR45a, in response to environmental stress.</title>
        <authorList>
            <person name="Tanabe N."/>
            <person name="Yoshimura K."/>
            <person name="Kimura A."/>
            <person name="Yabuta Y."/>
            <person name="Shigeoka S."/>
        </authorList>
    </citation>
    <scope>ALTERNATIVE SPLICING</scope>
    <scope>SUBCELLULAR LOCATION</scope>
    <scope>INTERACTION WITH RNU1</scope>
    <scope>TISSUE SPECIFICITY</scope>
    <scope>INDUCTION BY HIGH-LIGHT; PARAQUAT AND SALT STRESS</scope>
</reference>
<reference key="6">
    <citation type="journal article" date="2009" name="Plant Mol. Biol.">
        <title>Plant-specific SR-related protein atSR45a interacts with spliceosomal proteins in plant nucleus.</title>
        <authorList>
            <person name="Tanabe N."/>
            <person name="Kimura A."/>
            <person name="Yoshimura K."/>
            <person name="Shigeoka S."/>
        </authorList>
    </citation>
    <scope>FUNCTION</scope>
    <scope>SUBUNIT</scope>
    <scope>INTERACTION WITH SR45; RNU1; PRP38; SCL28 AND U2AF35B</scope>
    <source>
        <strain>cv. Columbia</strain>
    </source>
</reference>
<reference key="7">
    <citation type="journal article" date="2009" name="Plant Physiol.">
        <title>Plant SMU-1 and SMU-2 homologues regulate pre-mRNA splicing and multiple aspects of development.</title>
        <authorList>
            <person name="Chung T."/>
            <person name="Wang D."/>
            <person name="Kim C.S."/>
            <person name="Yadegari R."/>
            <person name="Larkins B.A."/>
        </authorList>
    </citation>
    <scope>ALTERNATIVE SPLICING</scope>
</reference>
<reference key="8">
    <citation type="journal article" date="2010" name="Plant Cell">
        <title>Implementing a rational and consistent nomenclature for serine/arginine-rich protein splicing factors (SR proteins) in plants.</title>
        <authorList>
            <person name="Barta A."/>
            <person name="Kalyna M."/>
            <person name="Reddy A.S."/>
        </authorList>
    </citation>
    <scope>GENE FAMILY</scope>
</reference>
<reference key="9">
    <citation type="journal article" date="2012" name="Am. J. Bot.">
        <title>Mining Arabidopsis thaliana RNA-seq data with Integrated Genome Browser reveals stress-induced alternative splicing of the putative splicing regulator SR45a.</title>
        <authorList>
            <person name="Gulledge A.A."/>
            <person name="Roberts A.D."/>
            <person name="Vora H."/>
            <person name="Patel K."/>
            <person name="Loraine A.E."/>
        </authorList>
    </citation>
    <scope>ALTERNATIVE SPLICING</scope>
    <scope>INDUCTION BY ABIOTIC STRESS</scope>
</reference>
<reference key="10">
    <citation type="journal article" date="2012" name="Biosci. Biotechnol. Biochem.">
        <title>Subcellular and subnuclear distribution of high-light responsive serine/arginine-rich proteins, atSR45a and atSR30, in Arabidopsis thaliana.</title>
        <authorList>
            <person name="Mori T."/>
            <person name="Yoshimura K."/>
            <person name="Nosaka R."/>
            <person name="Sakuyama H."/>
            <person name="Koike Y."/>
            <person name="Tanabe N."/>
            <person name="Maruta T."/>
            <person name="Tamoi M."/>
            <person name="Shigeoka S."/>
        </authorList>
    </citation>
    <scope>SUBCELLULAR LOCATION</scope>
    <scope>PHOSPHORYLATION</scope>
</reference>
<gene>
    <name type="primary">SR45A</name>
    <name type="synonym">TRA2</name>
    <name type="ordered locus">At1g07350</name>
    <name type="ORF">F22G5.31</name>
</gene>
<feature type="chain" id="PRO_0000429598" description="Serine/arginine-rich splicing factor SR45a">
    <location>
        <begin position="1"/>
        <end position="382"/>
    </location>
</feature>
<feature type="region of interest" description="Disordered" evidence="1">
    <location>
        <begin position="30"/>
        <end position="76"/>
    </location>
</feature>
<feature type="region of interest" description="Disordered" evidence="1">
    <location>
        <begin position="150"/>
        <end position="382"/>
    </location>
</feature>
<feature type="compositionally biased region" description="Low complexity" evidence="1">
    <location>
        <begin position="30"/>
        <end position="45"/>
    </location>
</feature>
<feature type="compositionally biased region" description="Low complexity" evidence="1">
    <location>
        <begin position="54"/>
        <end position="68"/>
    </location>
</feature>
<feature type="compositionally biased region" description="Low complexity" evidence="1">
    <location>
        <begin position="177"/>
        <end position="195"/>
    </location>
</feature>
<feature type="compositionally biased region" description="Low complexity" evidence="1">
    <location>
        <begin position="202"/>
        <end position="219"/>
    </location>
</feature>
<feature type="compositionally biased region" description="Basic and acidic residues" evidence="1">
    <location>
        <begin position="288"/>
        <end position="316"/>
    </location>
</feature>
<feature type="compositionally biased region" description="Low complexity" evidence="1">
    <location>
        <begin position="329"/>
        <end position="343"/>
    </location>
</feature>
<feature type="compositionally biased region" description="Basic residues" evidence="1">
    <location>
        <begin position="345"/>
        <end position="361"/>
    </location>
</feature>
<feature type="compositionally biased region" description="Low complexity" evidence="1">
    <location>
        <begin position="364"/>
        <end position="382"/>
    </location>
</feature>
<feature type="splice variant" id="VSP_054993" description="In isoform 2b and isoform 2." evidence="6">
    <location>
        <begin position="1"/>
        <end position="30"/>
    </location>
</feature>
<feature type="splice variant" id="VSP_054994" description="In isoform 2b and isoform 1b." evidence="6">
    <original>KARRRRGRTP</original>
    <variation>KFLWQQVCCL</variation>
    <location>
        <begin position="150"/>
        <end position="159"/>
    </location>
</feature>
<feature type="splice variant" id="VSP_054995" description="In isoform 2b and isoform 1b." evidence="6">
    <location>
        <begin position="160"/>
        <end position="382"/>
    </location>
</feature>
<comment type="function">
    <text evidence="3">Probable splicing factor involved in constitutive and/or alternative splicing events. May bridge the 5' and 3' components of the spliceosome.</text>
</comment>
<comment type="subunit">
    <text evidence="2 3">Component of the spliceosome. Homodimer. Interacts with PRP38, SCL28, SR45, RNU1 and U2AF35B.</text>
</comment>
<comment type="interaction">
    <interactant intactId="EBI-25519389">
        <id>Q84TH4</id>
    </interactant>
    <interactant intactId="EBI-927132">
        <id>P92964</id>
        <label>RS31</label>
    </interactant>
    <organismsDiffer>false</organismsDiffer>
    <experiments>3</experiments>
</comment>
<comment type="subcellular location">
    <subcellularLocation>
        <location evidence="2 5">Nucleus speckle</location>
    </subcellularLocation>
    <text>The phosphorylation status has no effect on the localization.</text>
</comment>
<comment type="alternative products">
    <event type="alternative splicing"/>
    <isoform>
        <id>Q84TH4-1</id>
        <name>1a</name>
        <sequence type="displayed"/>
    </isoform>
    <isoform>
        <id>Q84TH4-2</id>
        <name>2b</name>
        <sequence type="described" ref="VSP_054993 VSP_054994 VSP_054995"/>
    </isoform>
    <isoform>
        <id>Q84TH4-3</id>
        <name>2</name>
        <sequence type="described" ref="VSP_054993"/>
    </isoform>
    <isoform>
        <id>Q84TH4-4</id>
        <name>1b</name>
        <sequence type="described" ref="VSP_054994 VSP_054995"/>
    </isoform>
</comment>
<comment type="tissue specificity">
    <text evidence="2">Expressed in leaves, stems and roots.</text>
</comment>
<comment type="induction">
    <text evidence="2 4">Up-regulated early after high-light irradiation, but not by paraquat or high salt.</text>
</comment>
<comment type="PTM">
    <text evidence="5">Phosphorylated.</text>
</comment>
<comment type="miscellaneous">
    <text evidence="8 9">The splicing patterns of the pre-mRNA are similar throughout the developmental period, but change in response to various types of stress treatment (PubMed:17556373, PubMed:22291167).</text>
</comment>
<comment type="similarity">
    <text evidence="7">Belongs to the splicing factor SR family. SR45 subfamily.</text>
</comment>
<comment type="caution">
    <text evidence="7">According to PubMed:20884799, this protein should not be regarded as a classical SR protein.</text>
</comment>
<comment type="sequence caution" evidence="7">
    <conflict type="erroneous gene model prediction">
        <sequence resource="EMBL-CDS" id="AAF79558"/>
    </conflict>
</comment>
<evidence type="ECO:0000256" key="1">
    <source>
        <dbReference type="SAM" id="MobiDB-lite"/>
    </source>
</evidence>
<evidence type="ECO:0000269" key="2">
    <source>
    </source>
</evidence>
<evidence type="ECO:0000269" key="3">
    <source>
    </source>
</evidence>
<evidence type="ECO:0000269" key="4">
    <source>
    </source>
</evidence>
<evidence type="ECO:0000269" key="5">
    <source>
    </source>
</evidence>
<evidence type="ECO:0000303" key="6">
    <source>
    </source>
</evidence>
<evidence type="ECO:0000305" key="7"/>
<evidence type="ECO:0000305" key="8">
    <source>
    </source>
</evidence>
<evidence type="ECO:0000305" key="9">
    <source>
    </source>
</evidence>